<reference key="1">
    <citation type="journal article" date="2006" name="PLoS Genet.">
        <title>Comparative genomics of emerging human ehrlichiosis agents.</title>
        <authorList>
            <person name="Dunning Hotopp J.C."/>
            <person name="Lin M."/>
            <person name="Madupu R."/>
            <person name="Crabtree J."/>
            <person name="Angiuoli S.V."/>
            <person name="Eisen J.A."/>
            <person name="Seshadri R."/>
            <person name="Ren Q."/>
            <person name="Wu M."/>
            <person name="Utterback T.R."/>
            <person name="Smith S."/>
            <person name="Lewis M."/>
            <person name="Khouri H."/>
            <person name="Zhang C."/>
            <person name="Niu H."/>
            <person name="Lin Q."/>
            <person name="Ohashi N."/>
            <person name="Zhi N."/>
            <person name="Nelson W.C."/>
            <person name="Brinkac L.M."/>
            <person name="Dodson R.J."/>
            <person name="Rosovitz M.J."/>
            <person name="Sundaram J.P."/>
            <person name="Daugherty S.C."/>
            <person name="Davidsen T."/>
            <person name="Durkin A.S."/>
            <person name="Gwinn M.L."/>
            <person name="Haft D.H."/>
            <person name="Selengut J.D."/>
            <person name="Sullivan S.A."/>
            <person name="Zafar N."/>
            <person name="Zhou L."/>
            <person name="Benahmed F."/>
            <person name="Forberger H."/>
            <person name="Halpin R."/>
            <person name="Mulligan S."/>
            <person name="Robinson J."/>
            <person name="White O."/>
            <person name="Rikihisa Y."/>
            <person name="Tettelin H."/>
        </authorList>
    </citation>
    <scope>NUCLEOTIDE SEQUENCE [LARGE SCALE GENOMIC DNA]</scope>
    <source>
        <strain>HZ</strain>
    </source>
</reference>
<comment type="function">
    <text evidence="1">An essential GTPase which binds GTP, GDP and possibly (p)ppGpp with moderate affinity, with high nucleotide exchange rates and a fairly low GTP hydrolysis rate. Plays a role in control of the cell cycle, stress response, ribosome biogenesis and in those bacteria that undergo differentiation, in morphogenesis control.</text>
</comment>
<comment type="cofactor">
    <cofactor evidence="1">
        <name>Mg(2+)</name>
        <dbReference type="ChEBI" id="CHEBI:18420"/>
    </cofactor>
</comment>
<comment type="subunit">
    <text evidence="1">Monomer.</text>
</comment>
<comment type="subcellular location">
    <subcellularLocation>
        <location evidence="1">Cytoplasm</location>
    </subcellularLocation>
</comment>
<comment type="similarity">
    <text evidence="1">Belongs to the TRAFAC class OBG-HflX-like GTPase superfamily. OBG GTPase family.</text>
</comment>
<protein>
    <recommendedName>
        <fullName evidence="1">GTPase Obg</fullName>
        <ecNumber evidence="1">3.6.5.-</ecNumber>
    </recommendedName>
    <alternativeName>
        <fullName evidence="1">GTP-binding protein Obg</fullName>
    </alternativeName>
</protein>
<proteinExistence type="inferred from homology"/>
<evidence type="ECO:0000255" key="1">
    <source>
        <dbReference type="HAMAP-Rule" id="MF_01454"/>
    </source>
</evidence>
<evidence type="ECO:0000255" key="2">
    <source>
        <dbReference type="PROSITE-ProRule" id="PRU01231"/>
    </source>
</evidence>
<accession>Q2GK25</accession>
<feature type="chain" id="PRO_0000385700" description="GTPase Obg">
    <location>
        <begin position="1"/>
        <end position="352"/>
    </location>
</feature>
<feature type="domain" description="Obg" evidence="2">
    <location>
        <begin position="1"/>
        <end position="159"/>
    </location>
</feature>
<feature type="domain" description="OBG-type G" evidence="1">
    <location>
        <begin position="160"/>
        <end position="327"/>
    </location>
</feature>
<feature type="binding site" evidence="1">
    <location>
        <begin position="166"/>
        <end position="173"/>
    </location>
    <ligand>
        <name>GTP</name>
        <dbReference type="ChEBI" id="CHEBI:37565"/>
    </ligand>
</feature>
<feature type="binding site" evidence="1">
    <location>
        <position position="173"/>
    </location>
    <ligand>
        <name>Mg(2+)</name>
        <dbReference type="ChEBI" id="CHEBI:18420"/>
    </ligand>
</feature>
<feature type="binding site" evidence="1">
    <location>
        <begin position="191"/>
        <end position="195"/>
    </location>
    <ligand>
        <name>GTP</name>
        <dbReference type="ChEBI" id="CHEBI:37565"/>
    </ligand>
</feature>
<feature type="binding site" evidence="1">
    <location>
        <position position="193"/>
    </location>
    <ligand>
        <name>Mg(2+)</name>
        <dbReference type="ChEBI" id="CHEBI:18420"/>
    </ligand>
</feature>
<feature type="binding site" evidence="1">
    <location>
        <begin position="212"/>
        <end position="215"/>
    </location>
    <ligand>
        <name>GTP</name>
        <dbReference type="ChEBI" id="CHEBI:37565"/>
    </ligand>
</feature>
<feature type="binding site" evidence="1">
    <location>
        <begin position="279"/>
        <end position="282"/>
    </location>
    <ligand>
        <name>GTP</name>
        <dbReference type="ChEBI" id="CHEBI:37565"/>
    </ligand>
</feature>
<feature type="binding site" evidence="1">
    <location>
        <begin position="308"/>
        <end position="310"/>
    </location>
    <ligand>
        <name>GTP</name>
        <dbReference type="ChEBI" id="CHEBI:37565"/>
    </ligand>
</feature>
<name>OBG_ANAPZ</name>
<organism>
    <name type="scientific">Anaplasma phagocytophilum (strain HZ)</name>
    <dbReference type="NCBI Taxonomy" id="212042"/>
    <lineage>
        <taxon>Bacteria</taxon>
        <taxon>Pseudomonadati</taxon>
        <taxon>Pseudomonadota</taxon>
        <taxon>Alphaproteobacteria</taxon>
        <taxon>Rickettsiales</taxon>
        <taxon>Anaplasmataceae</taxon>
        <taxon>Anaplasma</taxon>
        <taxon>phagocytophilum group</taxon>
    </lineage>
</organism>
<gene>
    <name evidence="1" type="primary">obg</name>
    <name type="ordered locus">APH_0694</name>
</gene>
<sequence length="352" mass="38358">MSFIDEAKVFVKGGNGGNGCVSFRREKYIEFGGPDGGNGGDGGSVILEASSAVNTLLFFRYHQHLRAENGKSGSGKKKSGASGRDLVIKVPIGTQVFDSPGGSLIADLSTVGQRYVVASGGKGGVGNAQYKSSTNRAPVYYTLGAVEEEFPIFMQLKVLSDIGIIGMPNAGKSSLLSRCTMSKTKVADYPFTTLEPHLGVARINEYDLILADIPGLIENANEGAGLGHKFLKHIERCSLLLHLIDGSTEDIVGAYKLVSRELAMYSKELSEKREVIVLNKCDMITEEEIVQKKHLLEDYSNKTVVTLSLDDPLNPLLVMLYEMLQKDDIEEESKKFDPFLHVGYNKKKTPKI</sequence>
<keyword id="KW-0963">Cytoplasm</keyword>
<keyword id="KW-0342">GTP-binding</keyword>
<keyword id="KW-0378">Hydrolase</keyword>
<keyword id="KW-0460">Magnesium</keyword>
<keyword id="KW-0479">Metal-binding</keyword>
<keyword id="KW-0547">Nucleotide-binding</keyword>
<dbReference type="EC" id="3.6.5.-" evidence="1"/>
<dbReference type="EMBL" id="CP000235">
    <property type="protein sequence ID" value="ABD43339.1"/>
    <property type="molecule type" value="Genomic_DNA"/>
</dbReference>
<dbReference type="RefSeq" id="WP_011450797.1">
    <property type="nucleotide sequence ID" value="NC_007797.1"/>
</dbReference>
<dbReference type="SMR" id="Q2GK25"/>
<dbReference type="STRING" id="212042.APH_0694"/>
<dbReference type="PaxDb" id="212042-APH_0694"/>
<dbReference type="EnsemblBacteria" id="ABD43339">
    <property type="protein sequence ID" value="ABD43339"/>
    <property type="gene ID" value="APH_0694"/>
</dbReference>
<dbReference type="GeneID" id="92748242"/>
<dbReference type="KEGG" id="aph:APH_0694"/>
<dbReference type="eggNOG" id="COG0536">
    <property type="taxonomic scope" value="Bacteria"/>
</dbReference>
<dbReference type="HOGENOM" id="CLU_011747_2_0_5"/>
<dbReference type="Proteomes" id="UP000001943">
    <property type="component" value="Chromosome"/>
</dbReference>
<dbReference type="GO" id="GO:0005737">
    <property type="term" value="C:cytoplasm"/>
    <property type="evidence" value="ECO:0007669"/>
    <property type="project" value="UniProtKB-SubCell"/>
</dbReference>
<dbReference type="GO" id="GO:0005525">
    <property type="term" value="F:GTP binding"/>
    <property type="evidence" value="ECO:0007669"/>
    <property type="project" value="UniProtKB-UniRule"/>
</dbReference>
<dbReference type="GO" id="GO:0003924">
    <property type="term" value="F:GTPase activity"/>
    <property type="evidence" value="ECO:0007669"/>
    <property type="project" value="UniProtKB-UniRule"/>
</dbReference>
<dbReference type="GO" id="GO:0000287">
    <property type="term" value="F:magnesium ion binding"/>
    <property type="evidence" value="ECO:0007669"/>
    <property type="project" value="InterPro"/>
</dbReference>
<dbReference type="GO" id="GO:0042254">
    <property type="term" value="P:ribosome biogenesis"/>
    <property type="evidence" value="ECO:0007669"/>
    <property type="project" value="UniProtKB-UniRule"/>
</dbReference>
<dbReference type="CDD" id="cd01898">
    <property type="entry name" value="Obg"/>
    <property type="match status" value="1"/>
</dbReference>
<dbReference type="FunFam" id="2.70.210.12:FF:000001">
    <property type="entry name" value="GTPase Obg"/>
    <property type="match status" value="1"/>
</dbReference>
<dbReference type="Gene3D" id="2.70.210.12">
    <property type="entry name" value="GTP1/OBG domain"/>
    <property type="match status" value="1"/>
</dbReference>
<dbReference type="Gene3D" id="3.40.50.300">
    <property type="entry name" value="P-loop containing nucleotide triphosphate hydrolases"/>
    <property type="match status" value="1"/>
</dbReference>
<dbReference type="HAMAP" id="MF_01454">
    <property type="entry name" value="GTPase_Obg"/>
    <property type="match status" value="1"/>
</dbReference>
<dbReference type="InterPro" id="IPR031167">
    <property type="entry name" value="G_OBG"/>
</dbReference>
<dbReference type="InterPro" id="IPR006073">
    <property type="entry name" value="GTP-bd"/>
</dbReference>
<dbReference type="InterPro" id="IPR014100">
    <property type="entry name" value="GTP-bd_Obg/CgtA"/>
</dbReference>
<dbReference type="InterPro" id="IPR006074">
    <property type="entry name" value="GTP1-OBG_CS"/>
</dbReference>
<dbReference type="InterPro" id="IPR006169">
    <property type="entry name" value="GTP1_OBG_dom"/>
</dbReference>
<dbReference type="InterPro" id="IPR036726">
    <property type="entry name" value="GTP1_OBG_dom_sf"/>
</dbReference>
<dbReference type="InterPro" id="IPR045086">
    <property type="entry name" value="OBG_GTPase"/>
</dbReference>
<dbReference type="InterPro" id="IPR027417">
    <property type="entry name" value="P-loop_NTPase"/>
</dbReference>
<dbReference type="InterPro" id="IPR005225">
    <property type="entry name" value="Small_GTP-bd"/>
</dbReference>
<dbReference type="NCBIfam" id="TIGR02729">
    <property type="entry name" value="Obg_CgtA"/>
    <property type="match status" value="1"/>
</dbReference>
<dbReference type="NCBIfam" id="NF008955">
    <property type="entry name" value="PRK12297.1"/>
    <property type="match status" value="1"/>
</dbReference>
<dbReference type="NCBIfam" id="NF008956">
    <property type="entry name" value="PRK12299.1"/>
    <property type="match status" value="1"/>
</dbReference>
<dbReference type="NCBIfam" id="TIGR00231">
    <property type="entry name" value="small_GTP"/>
    <property type="match status" value="1"/>
</dbReference>
<dbReference type="PANTHER" id="PTHR11702">
    <property type="entry name" value="DEVELOPMENTALLY REGULATED GTP-BINDING PROTEIN-RELATED"/>
    <property type="match status" value="1"/>
</dbReference>
<dbReference type="PANTHER" id="PTHR11702:SF31">
    <property type="entry name" value="MITOCHONDRIAL RIBOSOME-ASSOCIATED GTPASE 2"/>
    <property type="match status" value="1"/>
</dbReference>
<dbReference type="Pfam" id="PF01018">
    <property type="entry name" value="GTP1_OBG"/>
    <property type="match status" value="1"/>
</dbReference>
<dbReference type="Pfam" id="PF01926">
    <property type="entry name" value="MMR_HSR1"/>
    <property type="match status" value="1"/>
</dbReference>
<dbReference type="PIRSF" id="PIRSF002401">
    <property type="entry name" value="GTP_bd_Obg/CgtA"/>
    <property type="match status" value="1"/>
</dbReference>
<dbReference type="PRINTS" id="PR00326">
    <property type="entry name" value="GTP1OBG"/>
</dbReference>
<dbReference type="SUPFAM" id="SSF82051">
    <property type="entry name" value="Obg GTP-binding protein N-terminal domain"/>
    <property type="match status" value="1"/>
</dbReference>
<dbReference type="SUPFAM" id="SSF52540">
    <property type="entry name" value="P-loop containing nucleoside triphosphate hydrolases"/>
    <property type="match status" value="1"/>
</dbReference>
<dbReference type="PROSITE" id="PS51710">
    <property type="entry name" value="G_OBG"/>
    <property type="match status" value="1"/>
</dbReference>
<dbReference type="PROSITE" id="PS00905">
    <property type="entry name" value="GTP1_OBG"/>
    <property type="match status" value="1"/>
</dbReference>
<dbReference type="PROSITE" id="PS51883">
    <property type="entry name" value="OBG"/>
    <property type="match status" value="1"/>
</dbReference>